<dbReference type="EMBL" id="CP000577">
    <property type="protein sequence ID" value="ABN75452.1"/>
    <property type="molecule type" value="Genomic_DNA"/>
</dbReference>
<dbReference type="EMBL" id="CP000577">
    <property type="protein sequence ID" value="ABN75466.1"/>
    <property type="molecule type" value="Genomic_DNA"/>
</dbReference>
<dbReference type="SMR" id="A3PGI6"/>
<dbReference type="KEGG" id="rsh:Rsph17029_0336"/>
<dbReference type="KEGG" id="rsh:Rsph17029_0350"/>
<dbReference type="HOGENOM" id="CLU_062853_0_0_5"/>
<dbReference type="GO" id="GO:0022625">
    <property type="term" value="C:cytosolic large ribosomal subunit"/>
    <property type="evidence" value="ECO:0007669"/>
    <property type="project" value="TreeGrafter"/>
</dbReference>
<dbReference type="GO" id="GO:0019843">
    <property type="term" value="F:rRNA binding"/>
    <property type="evidence" value="ECO:0007669"/>
    <property type="project" value="UniProtKB-UniRule"/>
</dbReference>
<dbReference type="GO" id="GO:0003735">
    <property type="term" value="F:structural constituent of ribosome"/>
    <property type="evidence" value="ECO:0007669"/>
    <property type="project" value="InterPro"/>
</dbReference>
<dbReference type="GO" id="GO:0000049">
    <property type="term" value="F:tRNA binding"/>
    <property type="evidence" value="ECO:0007669"/>
    <property type="project" value="UniProtKB-KW"/>
</dbReference>
<dbReference type="GO" id="GO:0006417">
    <property type="term" value="P:regulation of translation"/>
    <property type="evidence" value="ECO:0007669"/>
    <property type="project" value="UniProtKB-KW"/>
</dbReference>
<dbReference type="GO" id="GO:0006412">
    <property type="term" value="P:translation"/>
    <property type="evidence" value="ECO:0007669"/>
    <property type="project" value="UniProtKB-UniRule"/>
</dbReference>
<dbReference type="CDD" id="cd00403">
    <property type="entry name" value="Ribosomal_L1"/>
    <property type="match status" value="1"/>
</dbReference>
<dbReference type="FunFam" id="3.40.50.790:FF:000001">
    <property type="entry name" value="50S ribosomal protein L1"/>
    <property type="match status" value="1"/>
</dbReference>
<dbReference type="Gene3D" id="3.30.190.20">
    <property type="match status" value="1"/>
</dbReference>
<dbReference type="Gene3D" id="3.40.50.790">
    <property type="match status" value="1"/>
</dbReference>
<dbReference type="HAMAP" id="MF_01318_B">
    <property type="entry name" value="Ribosomal_uL1_B"/>
    <property type="match status" value="1"/>
</dbReference>
<dbReference type="InterPro" id="IPR005878">
    <property type="entry name" value="Ribosom_uL1_bac-type"/>
</dbReference>
<dbReference type="InterPro" id="IPR002143">
    <property type="entry name" value="Ribosomal_uL1"/>
</dbReference>
<dbReference type="InterPro" id="IPR023674">
    <property type="entry name" value="Ribosomal_uL1-like"/>
</dbReference>
<dbReference type="InterPro" id="IPR028364">
    <property type="entry name" value="Ribosomal_uL1/biogenesis"/>
</dbReference>
<dbReference type="InterPro" id="IPR016095">
    <property type="entry name" value="Ribosomal_uL1_3-a/b-sand"/>
</dbReference>
<dbReference type="InterPro" id="IPR023673">
    <property type="entry name" value="Ribosomal_uL1_CS"/>
</dbReference>
<dbReference type="NCBIfam" id="TIGR01169">
    <property type="entry name" value="rplA_bact"/>
    <property type="match status" value="1"/>
</dbReference>
<dbReference type="PANTHER" id="PTHR36427">
    <property type="entry name" value="54S RIBOSOMAL PROTEIN L1, MITOCHONDRIAL"/>
    <property type="match status" value="1"/>
</dbReference>
<dbReference type="PANTHER" id="PTHR36427:SF3">
    <property type="entry name" value="LARGE RIBOSOMAL SUBUNIT PROTEIN UL1M"/>
    <property type="match status" value="1"/>
</dbReference>
<dbReference type="Pfam" id="PF00687">
    <property type="entry name" value="Ribosomal_L1"/>
    <property type="match status" value="1"/>
</dbReference>
<dbReference type="PIRSF" id="PIRSF002155">
    <property type="entry name" value="Ribosomal_L1"/>
    <property type="match status" value="1"/>
</dbReference>
<dbReference type="SUPFAM" id="SSF56808">
    <property type="entry name" value="Ribosomal protein L1"/>
    <property type="match status" value="1"/>
</dbReference>
<dbReference type="PROSITE" id="PS01199">
    <property type="entry name" value="RIBOSOMAL_L1"/>
    <property type="match status" value="1"/>
</dbReference>
<gene>
    <name evidence="1" type="primary">rplA1</name>
    <name type="ordered locus">Rsph17029_0336</name>
</gene>
<gene>
    <name evidence="1" type="primary">rplA2</name>
    <name type="ordered locus">Rsph17029_0350</name>
</gene>
<organism>
    <name type="scientific">Cereibacter sphaeroides (strain ATCC 17029 / ATH 2.4.9)</name>
    <name type="common">Rhodobacter sphaeroides</name>
    <dbReference type="NCBI Taxonomy" id="349101"/>
    <lineage>
        <taxon>Bacteria</taxon>
        <taxon>Pseudomonadati</taxon>
        <taxon>Pseudomonadota</taxon>
        <taxon>Alphaproteobacteria</taxon>
        <taxon>Rhodobacterales</taxon>
        <taxon>Paracoccaceae</taxon>
        <taxon>Cereibacter</taxon>
    </lineage>
</organism>
<evidence type="ECO:0000255" key="1">
    <source>
        <dbReference type="HAMAP-Rule" id="MF_01318"/>
    </source>
</evidence>
<evidence type="ECO:0000305" key="2"/>
<accession>A3PGI6</accession>
<reference key="1">
    <citation type="submission" date="2007-02" db="EMBL/GenBank/DDBJ databases">
        <title>Complete sequence of chromosome 1 of Rhodobacter sphaeroides ATCC 17029.</title>
        <authorList>
            <person name="Copeland A."/>
            <person name="Lucas S."/>
            <person name="Lapidus A."/>
            <person name="Barry K."/>
            <person name="Detter J.C."/>
            <person name="Glavina del Rio T."/>
            <person name="Hammon N."/>
            <person name="Israni S."/>
            <person name="Dalin E."/>
            <person name="Tice H."/>
            <person name="Pitluck S."/>
            <person name="Kiss H."/>
            <person name="Brettin T."/>
            <person name="Bruce D."/>
            <person name="Han C."/>
            <person name="Tapia R."/>
            <person name="Gilna P."/>
            <person name="Schmutz J."/>
            <person name="Larimer F."/>
            <person name="Land M."/>
            <person name="Hauser L."/>
            <person name="Kyrpides N."/>
            <person name="Mikhailova N."/>
            <person name="Richardson P."/>
            <person name="Mackenzie C."/>
            <person name="Choudhary M."/>
            <person name="Donohue T.J."/>
            <person name="Kaplan S."/>
        </authorList>
    </citation>
    <scope>NUCLEOTIDE SEQUENCE [LARGE SCALE GENOMIC DNA]</scope>
    <source>
        <strain>ATCC 17029 / ATH 2.4.9</strain>
    </source>
</reference>
<keyword id="KW-0678">Repressor</keyword>
<keyword id="KW-0687">Ribonucleoprotein</keyword>
<keyword id="KW-0689">Ribosomal protein</keyword>
<keyword id="KW-0694">RNA-binding</keyword>
<keyword id="KW-0699">rRNA-binding</keyword>
<keyword id="KW-0810">Translation regulation</keyword>
<keyword id="KW-0820">tRNA-binding</keyword>
<name>RL1_CERS1</name>
<proteinExistence type="inferred from homology"/>
<comment type="function">
    <text evidence="1">Binds directly to 23S rRNA. The L1 stalk is quite mobile in the ribosome, and is involved in E site tRNA release.</text>
</comment>
<comment type="function">
    <text evidence="1">Protein L1 is also a translational repressor protein, it controls the translation of the L11 operon by binding to its mRNA.</text>
</comment>
<comment type="subunit">
    <text evidence="1">Part of the 50S ribosomal subunit.</text>
</comment>
<comment type="similarity">
    <text evidence="1">Belongs to the universal ribosomal protein uL1 family.</text>
</comment>
<protein>
    <recommendedName>
        <fullName evidence="1">Large ribosomal subunit protein uL1</fullName>
    </recommendedName>
    <alternativeName>
        <fullName evidence="2">50S ribosomal protein L1</fullName>
    </alternativeName>
</protein>
<feature type="chain" id="PRO_0000308085" description="Large ribosomal subunit protein uL1">
    <location>
        <begin position="1"/>
        <end position="232"/>
    </location>
</feature>
<sequence>MAKVGKRTRSAREAFVGKDLISVEDAVALIKQAASAKFDETLEVAMNLGVDPRHADQMVRGVVTLPNGTGKTVRVAVFARGAKADEAKAAGADIVGAEDLMETIQSGKIEFDRCIATPDMMPLVGRLGKILGPRNLMPNPKVGTVTMDVKSAVEAAKGGEVQFKVEKAGVIHAGVGKMSFEADKLAQNVRAFVDAVNRAKPAGAKGTYLKKVSLSSTMGPGVSVDLTSATSH</sequence>